<feature type="chain" id="PRO_1000214073" description="Sialic acid transporter NanT">
    <location>
        <begin position="1"/>
        <end position="510"/>
    </location>
</feature>
<feature type="transmembrane region" description="Helical" evidence="1">
    <location>
        <begin position="35"/>
        <end position="55"/>
    </location>
</feature>
<feature type="transmembrane region" description="Helical" evidence="1">
    <location>
        <begin position="72"/>
        <end position="92"/>
    </location>
</feature>
<feature type="transmembrane region" description="Helical" evidence="1">
    <location>
        <begin position="99"/>
        <end position="119"/>
    </location>
</feature>
<feature type="transmembrane region" description="Helical" evidence="1">
    <location>
        <begin position="120"/>
        <end position="140"/>
    </location>
</feature>
<feature type="transmembrane region" description="Helical" evidence="1">
    <location>
        <begin position="161"/>
        <end position="181"/>
    </location>
</feature>
<feature type="transmembrane region" description="Helical" evidence="1">
    <location>
        <begin position="183"/>
        <end position="203"/>
    </location>
</feature>
<feature type="transmembrane region" description="Helical" evidence="1">
    <location>
        <begin position="240"/>
        <end position="260"/>
    </location>
</feature>
<feature type="transmembrane region" description="Helical" evidence="1">
    <location>
        <begin position="262"/>
        <end position="282"/>
    </location>
</feature>
<feature type="transmembrane region" description="Helical" evidence="1">
    <location>
        <begin position="295"/>
        <end position="315"/>
    </location>
</feature>
<feature type="transmembrane region" description="Helical" evidence="1">
    <location>
        <begin position="330"/>
        <end position="350"/>
    </location>
</feature>
<feature type="transmembrane region" description="Helical" evidence="1">
    <location>
        <begin position="371"/>
        <end position="391"/>
    </location>
</feature>
<feature type="transmembrane region" description="Helical" evidence="1">
    <location>
        <begin position="392"/>
        <end position="412"/>
    </location>
</feature>
<feature type="transmembrane region" description="Helical" evidence="1">
    <location>
        <begin position="418"/>
        <end position="438"/>
    </location>
</feature>
<feature type="transmembrane region" description="Helical" evidence="1">
    <location>
        <begin position="449"/>
        <end position="469"/>
    </location>
</feature>
<keyword id="KW-0997">Cell inner membrane</keyword>
<keyword id="KW-1003">Cell membrane</keyword>
<keyword id="KW-0472">Membrane</keyword>
<keyword id="KW-0762">Sugar transport</keyword>
<keyword id="KW-0812">Transmembrane</keyword>
<keyword id="KW-1133">Transmembrane helix</keyword>
<keyword id="KW-0813">Transport</keyword>
<accession>A9QZJ2</accession>
<comment type="function">
    <text evidence="1">Catalyzes the proton-dependent transport of sialic acid.</text>
</comment>
<comment type="catalytic activity">
    <reaction evidence="1">
        <text>N-acetylneuraminate(in) + H(+)(in) = N-acetylneuraminate(out) + H(+)(out)</text>
        <dbReference type="Rhea" id="RHEA:28987"/>
        <dbReference type="ChEBI" id="CHEBI:15378"/>
        <dbReference type="ChEBI" id="CHEBI:35418"/>
    </reaction>
</comment>
<comment type="subcellular location">
    <subcellularLocation>
        <location evidence="1">Cell inner membrane</location>
        <topology evidence="1">Multi-pass membrane protein</topology>
    </subcellularLocation>
</comment>
<comment type="similarity">
    <text evidence="1">Belongs to the major facilitator superfamily. Sialate:H(+) symporter (SHS) (TC 2.A.1.12) family.</text>
</comment>
<evidence type="ECO:0000255" key="1">
    <source>
        <dbReference type="HAMAP-Rule" id="MF_01238"/>
    </source>
</evidence>
<protein>
    <recommendedName>
        <fullName evidence="1">Sialic acid transporter NanT</fullName>
    </recommendedName>
    <alternativeName>
        <fullName evidence="1">Sialic acid permease</fullName>
    </alternativeName>
    <alternativeName>
        <fullName evidence="1">Sialic acid/H(+) symporter</fullName>
    </alternativeName>
</protein>
<sequence>MSISVGPSREDKPLSGGAKPPRWYKQLTPAQWKAFVAAWIGYALDGFDFVLITLVLTDIKQEFGLTLIQATSLISAAFISRWFGGLVLGAMGDRYGRKLAMITSIVLFSFGTLACGLAPGYTTLFIARLIIGIGMAGEYGSSSTYVMESWPKNMRNKASGFLISGFSIGAVLAAQAYSYVVPAFGWRMLFYIGLLPIIFALWLRKNLPEAEDWEKAQSKQKKGKQVTDRNMVDILYRSHLSYLNIGLTIFAAVSLYLCFTGMVSTLLVVVLGILCAAIFIYFMVQTSGDRWPTGVMLMVVVFCAFLYSWPIQALLPTYLKMDLGYDPHTVGNILFFSGFGAAVGCCVGGFLGDWLGTRKAYVTSLLISQLLIIPLFAIQGSSILFLGGLLFLQQMLGQGIAGLLPKLLGGYFDTEQRAAGLGFTYNVGALGGALAPILGASIAQHLSLGTALGSLSFSLTFVVILLIGFDMPSRVQRWVRPSGLRMVDAIDGKPFSGAITAQHARVVTQK</sequence>
<name>NANT_YERPG</name>
<dbReference type="EMBL" id="CP000901">
    <property type="protein sequence ID" value="ABX87166.1"/>
    <property type="molecule type" value="Genomic_DNA"/>
</dbReference>
<dbReference type="RefSeq" id="WP_002231046.1">
    <property type="nucleotide sequence ID" value="NZ_CP009935.1"/>
</dbReference>
<dbReference type="SMR" id="A9QZJ2"/>
<dbReference type="KEGG" id="ypg:YpAngola_A2770"/>
<dbReference type="PATRIC" id="fig|349746.12.peg.3803"/>
<dbReference type="GO" id="GO:0005886">
    <property type="term" value="C:plasma membrane"/>
    <property type="evidence" value="ECO:0007669"/>
    <property type="project" value="UniProtKB-SubCell"/>
</dbReference>
<dbReference type="GO" id="GO:0046943">
    <property type="term" value="F:carboxylic acid transmembrane transporter activity"/>
    <property type="evidence" value="ECO:0007669"/>
    <property type="project" value="TreeGrafter"/>
</dbReference>
<dbReference type="GO" id="GO:0015538">
    <property type="term" value="F:sialic acid:proton symporter activity"/>
    <property type="evidence" value="ECO:0007669"/>
    <property type="project" value="UniProtKB-UniRule"/>
</dbReference>
<dbReference type="CDD" id="cd17316">
    <property type="entry name" value="MFS_SV2_like"/>
    <property type="match status" value="1"/>
</dbReference>
<dbReference type="FunFam" id="1.20.1250.20:FF:000027">
    <property type="entry name" value="Sialic acid transporter NanT"/>
    <property type="match status" value="1"/>
</dbReference>
<dbReference type="FunFam" id="1.20.1250.20:FF:000038">
    <property type="entry name" value="Sialic acid transporter NanT"/>
    <property type="match status" value="1"/>
</dbReference>
<dbReference type="Gene3D" id="1.20.1250.20">
    <property type="entry name" value="MFS general substrate transporter like domains"/>
    <property type="match status" value="2"/>
</dbReference>
<dbReference type="HAMAP" id="MF_01238">
    <property type="entry name" value="MFS_NanT"/>
    <property type="match status" value="1"/>
</dbReference>
<dbReference type="InterPro" id="IPR011701">
    <property type="entry name" value="MFS"/>
</dbReference>
<dbReference type="InterPro" id="IPR020846">
    <property type="entry name" value="MFS_dom"/>
</dbReference>
<dbReference type="InterPro" id="IPR036259">
    <property type="entry name" value="MFS_trans_sf"/>
</dbReference>
<dbReference type="InterPro" id="IPR004742">
    <property type="entry name" value="SA_transporter"/>
</dbReference>
<dbReference type="NCBIfam" id="NF003024">
    <property type="entry name" value="PRK03893.1"/>
    <property type="match status" value="1"/>
</dbReference>
<dbReference type="PANTHER" id="PTHR23508">
    <property type="entry name" value="CARBOXYLIC ACID TRANSPORTER PROTEIN HOMOLOG"/>
    <property type="match status" value="1"/>
</dbReference>
<dbReference type="PANTHER" id="PTHR23508:SF3">
    <property type="entry name" value="SIALIC ACID TRANSPORTER NANT"/>
    <property type="match status" value="1"/>
</dbReference>
<dbReference type="Pfam" id="PF07690">
    <property type="entry name" value="MFS_1"/>
    <property type="match status" value="1"/>
</dbReference>
<dbReference type="SUPFAM" id="SSF103473">
    <property type="entry name" value="MFS general substrate transporter"/>
    <property type="match status" value="1"/>
</dbReference>
<dbReference type="PROSITE" id="PS50850">
    <property type="entry name" value="MFS"/>
    <property type="match status" value="1"/>
</dbReference>
<gene>
    <name evidence="1" type="primary">nanT</name>
    <name type="ordered locus">YpAngola_A2770</name>
</gene>
<reference key="1">
    <citation type="journal article" date="2010" name="J. Bacteriol.">
        <title>Genome sequence of the deep-rooted Yersinia pestis strain Angola reveals new insights into the evolution and pangenome of the plague bacterium.</title>
        <authorList>
            <person name="Eppinger M."/>
            <person name="Worsham P.L."/>
            <person name="Nikolich M.P."/>
            <person name="Riley D.R."/>
            <person name="Sebastian Y."/>
            <person name="Mou S."/>
            <person name="Achtman M."/>
            <person name="Lindler L.E."/>
            <person name="Ravel J."/>
        </authorList>
    </citation>
    <scope>NUCLEOTIDE SEQUENCE [LARGE SCALE GENOMIC DNA]</scope>
    <source>
        <strain>Angola</strain>
    </source>
</reference>
<proteinExistence type="inferred from homology"/>
<organism>
    <name type="scientific">Yersinia pestis bv. Antiqua (strain Angola)</name>
    <dbReference type="NCBI Taxonomy" id="349746"/>
    <lineage>
        <taxon>Bacteria</taxon>
        <taxon>Pseudomonadati</taxon>
        <taxon>Pseudomonadota</taxon>
        <taxon>Gammaproteobacteria</taxon>
        <taxon>Enterobacterales</taxon>
        <taxon>Yersiniaceae</taxon>
        <taxon>Yersinia</taxon>
    </lineage>
</organism>